<organism>
    <name type="scientific">Lactobacillus johnsonii (strain CNCM I-12250 / La1 / NCC 533)</name>
    <dbReference type="NCBI Taxonomy" id="257314"/>
    <lineage>
        <taxon>Bacteria</taxon>
        <taxon>Bacillati</taxon>
        <taxon>Bacillota</taxon>
        <taxon>Bacilli</taxon>
        <taxon>Lactobacillales</taxon>
        <taxon>Lactobacillaceae</taxon>
        <taxon>Lactobacillus</taxon>
    </lineage>
</organism>
<sequence length="309" mass="34665">MEIQFLGTSAGQPSKSRNVSCIALKLLDELNEVWLFDVGEATQHQILKTNIRPRKVTRIFISHTHGDHIFGLPGFLSSRSFQGDGGPLTIYGPAGIEQFVQTSLRVSKTRVSYPIKYVVLKEDGLIFENDIFAVYTARLDHRVPSFGFRVVEKPRPGELLMDKVAEYNVPNGPLLGQLKAGKIITLSDGQKLDGRDFLGEERPGRIVTIIYDTRPTKNIGELADNADVLVHESTFDGGEEKMAHRYFHSTCLDAARVARDHNVGELYLTHISARYTGRAGRQLEHDARKIFKHTHLANDLDNFEITLRG</sequence>
<dbReference type="EC" id="3.1.26.11" evidence="1"/>
<dbReference type="EMBL" id="AE017198">
    <property type="protein sequence ID" value="AAS08894.1"/>
    <property type="molecule type" value="Genomic_DNA"/>
</dbReference>
<dbReference type="RefSeq" id="WP_011161923.1">
    <property type="nucleotide sequence ID" value="NC_005362.1"/>
</dbReference>
<dbReference type="SMR" id="Q74JN5"/>
<dbReference type="KEGG" id="ljo:LJ_1073"/>
<dbReference type="PATRIC" id="fig|257314.6.peg.933"/>
<dbReference type="eggNOG" id="COG1234">
    <property type="taxonomic scope" value="Bacteria"/>
</dbReference>
<dbReference type="HOGENOM" id="CLU_031317_2_0_9"/>
<dbReference type="Proteomes" id="UP000000581">
    <property type="component" value="Chromosome"/>
</dbReference>
<dbReference type="GO" id="GO:0042781">
    <property type="term" value="F:3'-tRNA processing endoribonuclease activity"/>
    <property type="evidence" value="ECO:0007669"/>
    <property type="project" value="UniProtKB-UniRule"/>
</dbReference>
<dbReference type="GO" id="GO:0008270">
    <property type="term" value="F:zinc ion binding"/>
    <property type="evidence" value="ECO:0007669"/>
    <property type="project" value="UniProtKB-UniRule"/>
</dbReference>
<dbReference type="CDD" id="cd07717">
    <property type="entry name" value="RNaseZ_ZiPD-like_MBL-fold"/>
    <property type="match status" value="1"/>
</dbReference>
<dbReference type="FunFam" id="3.60.15.10:FF:000002">
    <property type="entry name" value="Ribonuclease Z"/>
    <property type="match status" value="1"/>
</dbReference>
<dbReference type="Gene3D" id="3.60.15.10">
    <property type="entry name" value="Ribonuclease Z/Hydroxyacylglutathione hydrolase-like"/>
    <property type="match status" value="1"/>
</dbReference>
<dbReference type="HAMAP" id="MF_01818">
    <property type="entry name" value="RNase_Z_BN"/>
    <property type="match status" value="1"/>
</dbReference>
<dbReference type="InterPro" id="IPR001279">
    <property type="entry name" value="Metallo-B-lactamas"/>
</dbReference>
<dbReference type="InterPro" id="IPR036866">
    <property type="entry name" value="RibonucZ/Hydroxyglut_hydro"/>
</dbReference>
<dbReference type="InterPro" id="IPR013471">
    <property type="entry name" value="RNase_Z/BN"/>
</dbReference>
<dbReference type="NCBIfam" id="NF000801">
    <property type="entry name" value="PRK00055.1-3"/>
    <property type="match status" value="1"/>
</dbReference>
<dbReference type="NCBIfam" id="TIGR02651">
    <property type="entry name" value="RNase_Z"/>
    <property type="match status" value="1"/>
</dbReference>
<dbReference type="PANTHER" id="PTHR46018">
    <property type="entry name" value="ZINC PHOSPHODIESTERASE ELAC PROTEIN 1"/>
    <property type="match status" value="1"/>
</dbReference>
<dbReference type="PANTHER" id="PTHR46018:SF2">
    <property type="entry name" value="ZINC PHOSPHODIESTERASE ELAC PROTEIN 1"/>
    <property type="match status" value="1"/>
</dbReference>
<dbReference type="Pfam" id="PF00753">
    <property type="entry name" value="Lactamase_B"/>
    <property type="match status" value="1"/>
</dbReference>
<dbReference type="SUPFAM" id="SSF56281">
    <property type="entry name" value="Metallo-hydrolase/oxidoreductase"/>
    <property type="match status" value="1"/>
</dbReference>
<comment type="function">
    <text evidence="1">Zinc phosphodiesterase, which displays some tRNA 3'-processing endonuclease activity. Probably involved in tRNA maturation, by removing a 3'-trailer from precursor tRNA.</text>
</comment>
<comment type="catalytic activity">
    <reaction evidence="1">
        <text>Endonucleolytic cleavage of RNA, removing extra 3' nucleotides from tRNA precursor, generating 3' termini of tRNAs. A 3'-hydroxy group is left at the tRNA terminus and a 5'-phosphoryl group is left at the trailer molecule.</text>
        <dbReference type="EC" id="3.1.26.11"/>
    </reaction>
</comment>
<comment type="cofactor">
    <cofactor evidence="1">
        <name>Zn(2+)</name>
        <dbReference type="ChEBI" id="CHEBI:29105"/>
    </cofactor>
    <text evidence="1">Binds 2 Zn(2+) ions.</text>
</comment>
<comment type="subunit">
    <text evidence="1">Homodimer.</text>
</comment>
<comment type="similarity">
    <text evidence="1">Belongs to the RNase Z family.</text>
</comment>
<proteinExistence type="inferred from homology"/>
<name>RNZ_LACJO</name>
<protein>
    <recommendedName>
        <fullName evidence="1">Ribonuclease Z</fullName>
        <shortName evidence="1">RNase Z</shortName>
        <ecNumber evidence="1">3.1.26.11</ecNumber>
    </recommendedName>
    <alternativeName>
        <fullName evidence="1">tRNA 3 endonuclease</fullName>
    </alternativeName>
    <alternativeName>
        <fullName evidence="1">tRNase Z</fullName>
    </alternativeName>
</protein>
<reference key="1">
    <citation type="journal article" date="2004" name="Proc. Natl. Acad. Sci. U.S.A.">
        <title>The genome sequence of the probiotic intestinal bacterium Lactobacillus johnsonii NCC 533.</title>
        <authorList>
            <person name="Pridmore R.D."/>
            <person name="Berger B."/>
            <person name="Desiere F."/>
            <person name="Vilanova D."/>
            <person name="Barretto C."/>
            <person name="Pittet A.-C."/>
            <person name="Zwahlen M.-C."/>
            <person name="Rouvet M."/>
            <person name="Altermann E."/>
            <person name="Barrangou R."/>
            <person name="Mollet B."/>
            <person name="Mercenier A."/>
            <person name="Klaenhammer T."/>
            <person name="Arigoni F."/>
            <person name="Schell M.A."/>
        </authorList>
    </citation>
    <scope>NUCLEOTIDE SEQUENCE [LARGE SCALE GENOMIC DNA]</scope>
    <source>
        <strain>CNCM I-1225 / La1 / NCC 533</strain>
    </source>
</reference>
<evidence type="ECO:0000255" key="1">
    <source>
        <dbReference type="HAMAP-Rule" id="MF_01818"/>
    </source>
</evidence>
<keyword id="KW-0255">Endonuclease</keyword>
<keyword id="KW-0378">Hydrolase</keyword>
<keyword id="KW-0479">Metal-binding</keyword>
<keyword id="KW-0540">Nuclease</keyword>
<keyword id="KW-0819">tRNA processing</keyword>
<keyword id="KW-0862">Zinc</keyword>
<feature type="chain" id="PRO_0000155870" description="Ribonuclease Z">
    <location>
        <begin position="1"/>
        <end position="309"/>
    </location>
</feature>
<feature type="active site" description="Proton acceptor" evidence="1">
    <location>
        <position position="67"/>
    </location>
</feature>
<feature type="binding site" evidence="1">
    <location>
        <position position="63"/>
    </location>
    <ligand>
        <name>Zn(2+)</name>
        <dbReference type="ChEBI" id="CHEBI:29105"/>
        <label>1</label>
        <note>catalytic</note>
    </ligand>
</feature>
<feature type="binding site" evidence="1">
    <location>
        <position position="65"/>
    </location>
    <ligand>
        <name>Zn(2+)</name>
        <dbReference type="ChEBI" id="CHEBI:29105"/>
        <label>1</label>
        <note>catalytic</note>
    </ligand>
</feature>
<feature type="binding site" evidence="1">
    <location>
        <position position="67"/>
    </location>
    <ligand>
        <name>Zn(2+)</name>
        <dbReference type="ChEBI" id="CHEBI:29105"/>
        <label>2</label>
        <note>catalytic</note>
    </ligand>
</feature>
<feature type="binding site" evidence="1">
    <location>
        <position position="68"/>
    </location>
    <ligand>
        <name>Zn(2+)</name>
        <dbReference type="ChEBI" id="CHEBI:29105"/>
        <label>2</label>
        <note>catalytic</note>
    </ligand>
</feature>
<feature type="binding site" evidence="1">
    <location>
        <position position="141"/>
    </location>
    <ligand>
        <name>Zn(2+)</name>
        <dbReference type="ChEBI" id="CHEBI:29105"/>
        <label>1</label>
        <note>catalytic</note>
    </ligand>
</feature>
<feature type="binding site" evidence="1">
    <location>
        <position position="212"/>
    </location>
    <ligand>
        <name>Zn(2+)</name>
        <dbReference type="ChEBI" id="CHEBI:29105"/>
        <label>1</label>
        <note>catalytic</note>
    </ligand>
</feature>
<feature type="binding site" evidence="1">
    <location>
        <position position="212"/>
    </location>
    <ligand>
        <name>Zn(2+)</name>
        <dbReference type="ChEBI" id="CHEBI:29105"/>
        <label>2</label>
        <note>catalytic</note>
    </ligand>
</feature>
<feature type="binding site" evidence="1">
    <location>
        <position position="270"/>
    </location>
    <ligand>
        <name>Zn(2+)</name>
        <dbReference type="ChEBI" id="CHEBI:29105"/>
        <label>2</label>
        <note>catalytic</note>
    </ligand>
</feature>
<gene>
    <name evidence="1" type="primary">rnz</name>
    <name type="ordered locus">LJ_1073</name>
</gene>
<accession>Q74JN5</accession>